<sequence>LGVLLTICLLLFPLTAVPLDGDQPADQPAGRMQDDISSEQHPFFDPVKRCCVVCNAGCSGNCCP</sequence>
<comment type="subcellular location">
    <subcellularLocation>
        <location evidence="1">Secreted</location>
    </subcellularLocation>
</comment>
<comment type="tissue specificity">
    <text>Expressed by the venom duct.</text>
</comment>
<comment type="domain">
    <text>The cysteine framework is III (CC-C-C-CC). Classified in the M-3 branch, since 3 residues stand between the fourth and the fifth cysteine residues.</text>
</comment>
<comment type="similarity">
    <text evidence="3">Belongs to the conotoxin M superfamily.</text>
</comment>
<protein>
    <recommendedName>
        <fullName>Conotoxin Pu3.5</fullName>
    </recommendedName>
</protein>
<evidence type="ECO:0000250" key="1"/>
<evidence type="ECO:0000255" key="2"/>
<evidence type="ECO:0000305" key="3"/>
<keyword id="KW-0165">Cleavage on pair of basic residues</keyword>
<keyword id="KW-1015">Disulfide bond</keyword>
<keyword id="KW-0964">Secreted</keyword>
<keyword id="KW-0732">Signal</keyword>
<keyword id="KW-0800">Toxin</keyword>
<name>CM35_CONPL</name>
<feature type="signal peptide" evidence="2">
    <location>
        <begin position="1" status="less than"/>
        <end position="16"/>
    </location>
</feature>
<feature type="propeptide" id="PRO_0000397192" evidence="1">
    <location>
        <begin position="17"/>
        <end position="49"/>
    </location>
</feature>
<feature type="peptide" id="PRO_0000397193" description="Conotoxin Pu3.5">
    <location>
        <begin position="50"/>
        <end position="64"/>
    </location>
</feature>
<feature type="disulfide bond" evidence="1">
    <location>
        <begin position="50"/>
        <end position="63"/>
    </location>
</feature>
<feature type="disulfide bond" evidence="1">
    <location>
        <begin position="51"/>
        <end position="58"/>
    </location>
</feature>
<feature type="disulfide bond" evidence="1">
    <location>
        <begin position="54"/>
        <end position="62"/>
    </location>
</feature>
<feature type="non-terminal residue">
    <location>
        <position position="1"/>
    </location>
</feature>
<organism>
    <name type="scientific">Conus pulicarius</name>
    <name type="common">Flea-bitten cone</name>
    <dbReference type="NCBI Taxonomy" id="93154"/>
    <lineage>
        <taxon>Eukaryota</taxon>
        <taxon>Metazoa</taxon>
        <taxon>Spiralia</taxon>
        <taxon>Lophotrochozoa</taxon>
        <taxon>Mollusca</taxon>
        <taxon>Gastropoda</taxon>
        <taxon>Caenogastropoda</taxon>
        <taxon>Neogastropoda</taxon>
        <taxon>Conoidea</taxon>
        <taxon>Conidae</taxon>
        <taxon>Conus</taxon>
    </lineage>
</organism>
<reference key="1">
    <citation type="journal article" date="2010" name="Peptides">
        <title>Novel conopeptides in a form of disulfide-crosslinked dimer.</title>
        <authorList>
            <person name="Wu X.-C."/>
            <person name="Zhou M."/>
            <person name="Peng C."/>
            <person name="Shao X.-X."/>
            <person name="Guo Z.-Y."/>
            <person name="Chi C.-W."/>
        </authorList>
    </citation>
    <scope>NUCLEOTIDE SEQUENCE [MRNA]</scope>
    <source>
        <tissue>Venom duct</tissue>
    </source>
</reference>
<proteinExistence type="evidence at transcript level"/>
<dbReference type="GO" id="GO:0005576">
    <property type="term" value="C:extracellular region"/>
    <property type="evidence" value="ECO:0007669"/>
    <property type="project" value="UniProtKB-SubCell"/>
</dbReference>
<dbReference type="GO" id="GO:0008200">
    <property type="term" value="F:ion channel inhibitor activity"/>
    <property type="evidence" value="ECO:0007669"/>
    <property type="project" value="InterPro"/>
</dbReference>
<dbReference type="GO" id="GO:0090729">
    <property type="term" value="F:toxin activity"/>
    <property type="evidence" value="ECO:0007669"/>
    <property type="project" value="UniProtKB-KW"/>
</dbReference>
<dbReference type="InterPro" id="IPR004214">
    <property type="entry name" value="Conotoxin"/>
</dbReference>
<dbReference type="Pfam" id="PF02950">
    <property type="entry name" value="Conotoxin"/>
    <property type="match status" value="1"/>
</dbReference>
<accession>P0CH23</accession>